<comment type="function">
    <text evidence="1">An essential GTPase that binds both GDP and GTP, with rapid nucleotide exchange. Plays a role in 16S rRNA processing and 30S ribosomal subunit biogenesis and possibly also in cell cycle regulation and energy metabolism.</text>
</comment>
<comment type="subunit">
    <text evidence="1">Monomer.</text>
</comment>
<comment type="subcellular location">
    <subcellularLocation>
        <location>Cytoplasm</location>
    </subcellularLocation>
    <subcellularLocation>
        <location evidence="1">Cell membrane</location>
        <topology evidence="1">Peripheral membrane protein</topology>
    </subcellularLocation>
</comment>
<comment type="similarity">
    <text evidence="1 2">Belongs to the TRAFAC class TrmE-Era-EngA-EngB-Septin-like GTPase superfamily. Era GTPase family.</text>
</comment>
<dbReference type="EMBL" id="CP000673">
    <property type="protein sequence ID" value="EDK32967.1"/>
    <property type="molecule type" value="Genomic_DNA"/>
</dbReference>
<dbReference type="RefSeq" id="WP_012101295.1">
    <property type="nucleotide sequence ID" value="NC_009706.1"/>
</dbReference>
<dbReference type="SMR" id="A5N6N6"/>
<dbReference type="STRING" id="431943.CKL_0916"/>
<dbReference type="KEGG" id="ckl:CKL_0916"/>
<dbReference type="eggNOG" id="COG1159">
    <property type="taxonomic scope" value="Bacteria"/>
</dbReference>
<dbReference type="HOGENOM" id="CLU_038009_1_0_9"/>
<dbReference type="Proteomes" id="UP000002411">
    <property type="component" value="Chromosome"/>
</dbReference>
<dbReference type="GO" id="GO:0005829">
    <property type="term" value="C:cytosol"/>
    <property type="evidence" value="ECO:0007669"/>
    <property type="project" value="TreeGrafter"/>
</dbReference>
<dbReference type="GO" id="GO:0005886">
    <property type="term" value="C:plasma membrane"/>
    <property type="evidence" value="ECO:0007669"/>
    <property type="project" value="UniProtKB-SubCell"/>
</dbReference>
<dbReference type="GO" id="GO:0005525">
    <property type="term" value="F:GTP binding"/>
    <property type="evidence" value="ECO:0007669"/>
    <property type="project" value="UniProtKB-UniRule"/>
</dbReference>
<dbReference type="GO" id="GO:0003924">
    <property type="term" value="F:GTPase activity"/>
    <property type="evidence" value="ECO:0007669"/>
    <property type="project" value="UniProtKB-UniRule"/>
</dbReference>
<dbReference type="GO" id="GO:0043024">
    <property type="term" value="F:ribosomal small subunit binding"/>
    <property type="evidence" value="ECO:0007669"/>
    <property type="project" value="TreeGrafter"/>
</dbReference>
<dbReference type="GO" id="GO:0070181">
    <property type="term" value="F:small ribosomal subunit rRNA binding"/>
    <property type="evidence" value="ECO:0007669"/>
    <property type="project" value="UniProtKB-UniRule"/>
</dbReference>
<dbReference type="GO" id="GO:0000028">
    <property type="term" value="P:ribosomal small subunit assembly"/>
    <property type="evidence" value="ECO:0007669"/>
    <property type="project" value="TreeGrafter"/>
</dbReference>
<dbReference type="CDD" id="cd04163">
    <property type="entry name" value="Era"/>
    <property type="match status" value="1"/>
</dbReference>
<dbReference type="CDD" id="cd22534">
    <property type="entry name" value="KH-II_Era"/>
    <property type="match status" value="1"/>
</dbReference>
<dbReference type="FunFam" id="3.30.300.20:FF:000003">
    <property type="entry name" value="GTPase Era"/>
    <property type="match status" value="1"/>
</dbReference>
<dbReference type="FunFam" id="3.40.50.300:FF:000094">
    <property type="entry name" value="GTPase Era"/>
    <property type="match status" value="1"/>
</dbReference>
<dbReference type="Gene3D" id="3.30.300.20">
    <property type="match status" value="1"/>
</dbReference>
<dbReference type="Gene3D" id="3.40.50.300">
    <property type="entry name" value="P-loop containing nucleotide triphosphate hydrolases"/>
    <property type="match status" value="1"/>
</dbReference>
<dbReference type="HAMAP" id="MF_00367">
    <property type="entry name" value="GTPase_Era"/>
    <property type="match status" value="1"/>
</dbReference>
<dbReference type="InterPro" id="IPR030388">
    <property type="entry name" value="G_ERA_dom"/>
</dbReference>
<dbReference type="InterPro" id="IPR006073">
    <property type="entry name" value="GTP-bd"/>
</dbReference>
<dbReference type="InterPro" id="IPR005662">
    <property type="entry name" value="GTPase_Era-like"/>
</dbReference>
<dbReference type="InterPro" id="IPR015946">
    <property type="entry name" value="KH_dom-like_a/b"/>
</dbReference>
<dbReference type="InterPro" id="IPR004044">
    <property type="entry name" value="KH_dom_type_2"/>
</dbReference>
<dbReference type="InterPro" id="IPR009019">
    <property type="entry name" value="KH_sf_prok-type"/>
</dbReference>
<dbReference type="InterPro" id="IPR027417">
    <property type="entry name" value="P-loop_NTPase"/>
</dbReference>
<dbReference type="InterPro" id="IPR005225">
    <property type="entry name" value="Small_GTP-bd"/>
</dbReference>
<dbReference type="NCBIfam" id="TIGR00436">
    <property type="entry name" value="era"/>
    <property type="match status" value="1"/>
</dbReference>
<dbReference type="NCBIfam" id="NF000908">
    <property type="entry name" value="PRK00089.1"/>
    <property type="match status" value="1"/>
</dbReference>
<dbReference type="NCBIfam" id="TIGR00231">
    <property type="entry name" value="small_GTP"/>
    <property type="match status" value="1"/>
</dbReference>
<dbReference type="PANTHER" id="PTHR42698">
    <property type="entry name" value="GTPASE ERA"/>
    <property type="match status" value="1"/>
</dbReference>
<dbReference type="PANTHER" id="PTHR42698:SF1">
    <property type="entry name" value="GTPASE ERA, MITOCHONDRIAL"/>
    <property type="match status" value="1"/>
</dbReference>
<dbReference type="Pfam" id="PF07650">
    <property type="entry name" value="KH_2"/>
    <property type="match status" value="1"/>
</dbReference>
<dbReference type="Pfam" id="PF01926">
    <property type="entry name" value="MMR_HSR1"/>
    <property type="match status" value="1"/>
</dbReference>
<dbReference type="PRINTS" id="PR00449">
    <property type="entry name" value="RASTRNSFRMNG"/>
</dbReference>
<dbReference type="SUPFAM" id="SSF52540">
    <property type="entry name" value="P-loop containing nucleoside triphosphate hydrolases"/>
    <property type="match status" value="1"/>
</dbReference>
<dbReference type="SUPFAM" id="SSF54814">
    <property type="entry name" value="Prokaryotic type KH domain (KH-domain type II)"/>
    <property type="match status" value="1"/>
</dbReference>
<dbReference type="PROSITE" id="PS51713">
    <property type="entry name" value="G_ERA"/>
    <property type="match status" value="1"/>
</dbReference>
<dbReference type="PROSITE" id="PS50823">
    <property type="entry name" value="KH_TYPE_2"/>
    <property type="match status" value="1"/>
</dbReference>
<accession>A5N6N6</accession>
<protein>
    <recommendedName>
        <fullName evidence="1">GTPase Era</fullName>
    </recommendedName>
</protein>
<feature type="chain" id="PRO_1000079674" description="GTPase Era">
    <location>
        <begin position="1"/>
        <end position="293"/>
    </location>
</feature>
<feature type="domain" description="Era-type G" evidence="2">
    <location>
        <begin position="3"/>
        <end position="170"/>
    </location>
</feature>
<feature type="domain" description="KH type-2" evidence="1">
    <location>
        <begin position="201"/>
        <end position="278"/>
    </location>
</feature>
<feature type="region of interest" description="G1" evidence="2">
    <location>
        <begin position="11"/>
        <end position="18"/>
    </location>
</feature>
<feature type="region of interest" description="G2" evidence="2">
    <location>
        <begin position="37"/>
        <end position="41"/>
    </location>
</feature>
<feature type="region of interest" description="G3" evidence="2">
    <location>
        <begin position="58"/>
        <end position="61"/>
    </location>
</feature>
<feature type="region of interest" description="G4" evidence="2">
    <location>
        <begin position="120"/>
        <end position="123"/>
    </location>
</feature>
<feature type="region of interest" description="G5" evidence="2">
    <location>
        <begin position="149"/>
        <end position="151"/>
    </location>
</feature>
<feature type="binding site" evidence="1">
    <location>
        <begin position="11"/>
        <end position="18"/>
    </location>
    <ligand>
        <name>GTP</name>
        <dbReference type="ChEBI" id="CHEBI:37565"/>
    </ligand>
</feature>
<feature type="binding site" evidence="1">
    <location>
        <begin position="58"/>
        <end position="62"/>
    </location>
    <ligand>
        <name>GTP</name>
        <dbReference type="ChEBI" id="CHEBI:37565"/>
    </ligand>
</feature>
<feature type="binding site" evidence="1">
    <location>
        <begin position="120"/>
        <end position="123"/>
    </location>
    <ligand>
        <name>GTP</name>
        <dbReference type="ChEBI" id="CHEBI:37565"/>
    </ligand>
</feature>
<organism>
    <name type="scientific">Clostridium kluyveri (strain ATCC 8527 / DSM 555 / NBRC 12016 / NCIMB 10680 / K1)</name>
    <dbReference type="NCBI Taxonomy" id="431943"/>
    <lineage>
        <taxon>Bacteria</taxon>
        <taxon>Bacillati</taxon>
        <taxon>Bacillota</taxon>
        <taxon>Clostridia</taxon>
        <taxon>Eubacteriales</taxon>
        <taxon>Clostridiaceae</taxon>
        <taxon>Clostridium</taxon>
    </lineage>
</organism>
<evidence type="ECO:0000255" key="1">
    <source>
        <dbReference type="HAMAP-Rule" id="MF_00367"/>
    </source>
</evidence>
<evidence type="ECO:0000255" key="2">
    <source>
        <dbReference type="PROSITE-ProRule" id="PRU01050"/>
    </source>
</evidence>
<reference key="1">
    <citation type="journal article" date="2008" name="Proc. Natl. Acad. Sci. U.S.A.">
        <title>The genome of Clostridium kluyveri, a strict anaerobe with unique metabolic features.</title>
        <authorList>
            <person name="Seedorf H."/>
            <person name="Fricke W.F."/>
            <person name="Veith B."/>
            <person name="Brueggemann H."/>
            <person name="Liesegang H."/>
            <person name="Strittmatter A."/>
            <person name="Miethke M."/>
            <person name="Buckel W."/>
            <person name="Hinderberger J."/>
            <person name="Li F."/>
            <person name="Hagemeier C."/>
            <person name="Thauer R.K."/>
            <person name="Gottschalk G."/>
        </authorList>
    </citation>
    <scope>NUCLEOTIDE SEQUENCE [LARGE SCALE GENOMIC DNA]</scope>
    <source>
        <strain>ATCC 8527 / DSM 555 / NBRC 12016 / NCIMB 10680 / K1</strain>
    </source>
</reference>
<name>ERA_CLOK5</name>
<proteinExistence type="inferred from homology"/>
<gene>
    <name evidence="1" type="primary">era</name>
    <name type="ordered locus">CKL_0916</name>
</gene>
<keyword id="KW-1003">Cell membrane</keyword>
<keyword id="KW-0963">Cytoplasm</keyword>
<keyword id="KW-0342">GTP-binding</keyword>
<keyword id="KW-0472">Membrane</keyword>
<keyword id="KW-0547">Nucleotide-binding</keyword>
<keyword id="KW-1185">Reference proteome</keyword>
<keyword id="KW-0690">Ribosome biogenesis</keyword>
<keyword id="KW-0694">RNA-binding</keyword>
<keyword id="KW-0699">rRNA-binding</keyword>
<sequence>MIKSGFITIIGRPNVGKSTLLNSIMGEKLSIVSCKPQTTRNSIQTILTRDDFQLIFVDTPGIHKPKHKLGNYMVKVAESSVKDVDLILFLITPDVEVGKGDRYILEQLKKENIPVFLVVNKIDENPQEKVAQTLKNYSEIFDFAEIIPISALKQKNVKELVELMVKYMPEGPKYYPDDMITDKQEKFVVSEIIREKALRLLSKEVPHGIAVDILSMKKNSKGLYNIEATILCEKESHKGIIIGKKGAMLKKISTYAREDIEKFLDSKVYLEVWVKVKKEWRDSDRLLKELGYK</sequence>